<feature type="chain" id="PRO_0000090135" description="Triosephosphate isomerase">
    <location>
        <begin position="1"/>
        <end position="257"/>
    </location>
</feature>
<feature type="active site" description="Electrophile" evidence="2">
    <location>
        <position position="96"/>
    </location>
</feature>
<feature type="active site" description="Proton acceptor" evidence="2">
    <location>
        <position position="170"/>
    </location>
</feature>
<feature type="binding site" evidence="2">
    <location>
        <position position="11"/>
    </location>
    <ligand>
        <name>substrate</name>
    </ligand>
</feature>
<feature type="binding site" evidence="2">
    <location>
        <position position="13"/>
    </location>
    <ligand>
        <name>substrate</name>
    </ligand>
</feature>
<feature type="strand" evidence="5">
    <location>
        <begin position="7"/>
        <end position="11"/>
    </location>
</feature>
<feature type="helix" evidence="5">
    <location>
        <begin position="18"/>
        <end position="29"/>
    </location>
</feature>
<feature type="strand" evidence="5">
    <location>
        <begin position="37"/>
        <end position="42"/>
    </location>
</feature>
<feature type="helix" evidence="5">
    <location>
        <begin position="45"/>
        <end position="47"/>
    </location>
</feature>
<feature type="helix" evidence="5">
    <location>
        <begin position="48"/>
        <end position="54"/>
    </location>
</feature>
<feature type="strand" evidence="5">
    <location>
        <begin position="61"/>
        <end position="65"/>
    </location>
</feature>
<feature type="strand" evidence="5">
    <location>
        <begin position="72"/>
        <end position="74"/>
    </location>
</feature>
<feature type="helix" evidence="5">
    <location>
        <begin position="81"/>
        <end position="86"/>
    </location>
</feature>
<feature type="strand" evidence="5">
    <location>
        <begin position="91"/>
        <end position="94"/>
    </location>
</feature>
<feature type="helix" evidence="5">
    <location>
        <begin position="97"/>
        <end position="101"/>
    </location>
</feature>
<feature type="turn" evidence="4">
    <location>
        <begin position="102"/>
        <end position="104"/>
    </location>
</feature>
<feature type="helix" evidence="5">
    <location>
        <begin position="107"/>
        <end position="119"/>
    </location>
</feature>
<feature type="strand" evidence="5">
    <location>
        <begin position="123"/>
        <end position="128"/>
    </location>
</feature>
<feature type="helix" evidence="5">
    <location>
        <begin position="132"/>
        <end position="136"/>
    </location>
</feature>
<feature type="helix" evidence="5">
    <location>
        <begin position="140"/>
        <end position="155"/>
    </location>
</feature>
<feature type="helix" evidence="5">
    <location>
        <begin position="159"/>
        <end position="162"/>
    </location>
</feature>
<feature type="strand" evidence="5">
    <location>
        <begin position="165"/>
        <end position="169"/>
    </location>
</feature>
<feature type="helix" evidence="5">
    <location>
        <begin position="172"/>
        <end position="174"/>
    </location>
</feature>
<feature type="turn" evidence="5">
    <location>
        <begin position="175"/>
        <end position="177"/>
    </location>
</feature>
<feature type="helix" evidence="5">
    <location>
        <begin position="183"/>
        <end position="206"/>
    </location>
</feature>
<feature type="strand" evidence="5">
    <location>
        <begin position="210"/>
        <end position="216"/>
    </location>
</feature>
<feature type="turn" evidence="5">
    <location>
        <begin position="219"/>
        <end position="221"/>
    </location>
</feature>
<feature type="helix" evidence="5">
    <location>
        <begin position="222"/>
        <end position="226"/>
    </location>
</feature>
<feature type="strand" evidence="5">
    <location>
        <begin position="233"/>
        <end position="237"/>
    </location>
</feature>
<feature type="helix" evidence="5">
    <location>
        <begin position="238"/>
        <end position="241"/>
    </location>
</feature>
<feature type="helix" evidence="5">
    <location>
        <begin position="244"/>
        <end position="255"/>
    </location>
</feature>
<accession>P36186</accession>
<dbReference type="EC" id="5.3.1.1" evidence="2"/>
<dbReference type="EC" id="4.2.3.3" evidence="1"/>
<dbReference type="EMBL" id="L02120">
    <property type="protein sequence ID" value="AAA18203.1"/>
    <property type="molecule type" value="Unassigned_DNA"/>
</dbReference>
<dbReference type="RefSeq" id="XP_001706830.1">
    <property type="nucleotide sequence ID" value="XM_001706778.1"/>
</dbReference>
<dbReference type="PDB" id="2DP3">
    <property type="method" value="X-ray"/>
    <property type="resolution" value="2.10 A"/>
    <property type="chains" value="A=1-257"/>
</dbReference>
<dbReference type="PDB" id="3PF3">
    <property type="method" value="X-ray"/>
    <property type="resolution" value="2.10 A"/>
    <property type="chains" value="A=1-257"/>
</dbReference>
<dbReference type="PDB" id="4BI5">
    <property type="method" value="X-ray"/>
    <property type="resolution" value="2.70 A"/>
    <property type="chains" value="A/B/C/D/E/F/G/H/I/J/K/L/M/N/O/P/Q/R/S/T=1-255"/>
</dbReference>
<dbReference type="PDB" id="4BI6">
    <property type="method" value="X-ray"/>
    <property type="resolution" value="1.45 A"/>
    <property type="chains" value="A=1-257"/>
</dbReference>
<dbReference type="PDB" id="4BI7">
    <property type="method" value="X-ray"/>
    <property type="resolution" value="1.60 A"/>
    <property type="chains" value="A=1-257"/>
</dbReference>
<dbReference type="PDBsum" id="2DP3"/>
<dbReference type="PDBsum" id="3PF3"/>
<dbReference type="PDBsum" id="4BI5"/>
<dbReference type="PDBsum" id="4BI6"/>
<dbReference type="PDBsum" id="4BI7"/>
<dbReference type="SMR" id="P36186"/>
<dbReference type="GeneID" id="5699725"/>
<dbReference type="KEGG" id="gla:GL50803_0093938"/>
<dbReference type="VEuPathDB" id="GiardiaDB:DHA2_93938"/>
<dbReference type="VEuPathDB" id="GiardiaDB:GL50581_1369"/>
<dbReference type="VEuPathDB" id="GiardiaDB:GL50803_0093938"/>
<dbReference type="VEuPathDB" id="GiardiaDB:QR46_3913"/>
<dbReference type="eggNOG" id="KOG1643">
    <property type="taxonomic scope" value="Eukaryota"/>
</dbReference>
<dbReference type="OrthoDB" id="6715177at2759"/>
<dbReference type="BRENDA" id="5.3.1.1">
    <property type="organism ID" value="2401"/>
</dbReference>
<dbReference type="UniPathway" id="UPA00109">
    <property type="reaction ID" value="UER00189"/>
</dbReference>
<dbReference type="UniPathway" id="UPA00138"/>
<dbReference type="EvolutionaryTrace" id="P36186"/>
<dbReference type="GO" id="GO:0005829">
    <property type="term" value="C:cytosol"/>
    <property type="evidence" value="ECO:0007669"/>
    <property type="project" value="TreeGrafter"/>
</dbReference>
<dbReference type="GO" id="GO:0008929">
    <property type="term" value="F:methylglyoxal synthase activity"/>
    <property type="evidence" value="ECO:0007669"/>
    <property type="project" value="UniProtKB-EC"/>
</dbReference>
<dbReference type="GO" id="GO:0004807">
    <property type="term" value="F:triose-phosphate isomerase activity"/>
    <property type="evidence" value="ECO:0007669"/>
    <property type="project" value="UniProtKB-EC"/>
</dbReference>
<dbReference type="GO" id="GO:0006094">
    <property type="term" value="P:gluconeogenesis"/>
    <property type="evidence" value="ECO:0007669"/>
    <property type="project" value="UniProtKB-UniPathway"/>
</dbReference>
<dbReference type="GO" id="GO:0046166">
    <property type="term" value="P:glyceraldehyde-3-phosphate biosynthetic process"/>
    <property type="evidence" value="ECO:0007669"/>
    <property type="project" value="TreeGrafter"/>
</dbReference>
<dbReference type="GO" id="GO:0019563">
    <property type="term" value="P:glycerol catabolic process"/>
    <property type="evidence" value="ECO:0007669"/>
    <property type="project" value="TreeGrafter"/>
</dbReference>
<dbReference type="GO" id="GO:0006096">
    <property type="term" value="P:glycolytic process"/>
    <property type="evidence" value="ECO:0007669"/>
    <property type="project" value="UniProtKB-UniPathway"/>
</dbReference>
<dbReference type="CDD" id="cd00311">
    <property type="entry name" value="TIM"/>
    <property type="match status" value="1"/>
</dbReference>
<dbReference type="FunFam" id="3.20.20.70:FF:000309">
    <property type="entry name" value="Triosephosphate isomerase"/>
    <property type="match status" value="1"/>
</dbReference>
<dbReference type="Gene3D" id="3.20.20.70">
    <property type="entry name" value="Aldolase class I"/>
    <property type="match status" value="1"/>
</dbReference>
<dbReference type="HAMAP" id="MF_00147_B">
    <property type="entry name" value="TIM_B"/>
    <property type="match status" value="1"/>
</dbReference>
<dbReference type="InterPro" id="IPR013785">
    <property type="entry name" value="Aldolase_TIM"/>
</dbReference>
<dbReference type="InterPro" id="IPR035990">
    <property type="entry name" value="TIM_sf"/>
</dbReference>
<dbReference type="InterPro" id="IPR022896">
    <property type="entry name" value="TrioseP_Isoase_bac/euk"/>
</dbReference>
<dbReference type="InterPro" id="IPR000652">
    <property type="entry name" value="Triosephosphate_isomerase"/>
</dbReference>
<dbReference type="InterPro" id="IPR020861">
    <property type="entry name" value="Triosephosphate_isomerase_AS"/>
</dbReference>
<dbReference type="NCBIfam" id="TIGR00419">
    <property type="entry name" value="tim"/>
    <property type="match status" value="1"/>
</dbReference>
<dbReference type="PANTHER" id="PTHR21139">
    <property type="entry name" value="TRIOSEPHOSPHATE ISOMERASE"/>
    <property type="match status" value="1"/>
</dbReference>
<dbReference type="PANTHER" id="PTHR21139:SF2">
    <property type="entry name" value="TRIOSEPHOSPHATE ISOMERASE"/>
    <property type="match status" value="1"/>
</dbReference>
<dbReference type="Pfam" id="PF00121">
    <property type="entry name" value="TIM"/>
    <property type="match status" value="1"/>
</dbReference>
<dbReference type="SUPFAM" id="SSF51351">
    <property type="entry name" value="Triosephosphate isomerase (TIM)"/>
    <property type="match status" value="1"/>
</dbReference>
<dbReference type="PROSITE" id="PS00171">
    <property type="entry name" value="TIM_1"/>
    <property type="match status" value="1"/>
</dbReference>
<dbReference type="PROSITE" id="PS51440">
    <property type="entry name" value="TIM_2"/>
    <property type="match status" value="1"/>
</dbReference>
<evidence type="ECO:0000250" key="1">
    <source>
        <dbReference type="UniProtKB" id="P00939"/>
    </source>
</evidence>
<evidence type="ECO:0000255" key="2">
    <source>
        <dbReference type="PROSITE-ProRule" id="PRU10127"/>
    </source>
</evidence>
<evidence type="ECO:0000305" key="3"/>
<evidence type="ECO:0007829" key="4">
    <source>
        <dbReference type="PDB" id="4BI5"/>
    </source>
</evidence>
<evidence type="ECO:0007829" key="5">
    <source>
        <dbReference type="PDB" id="4BI6"/>
    </source>
</evidence>
<reference key="1">
    <citation type="journal article" date="1994" name="Exp. Parasitol.">
        <title>Complementation of an Escherichia coli glycolysis mutant by Giardia lamblia triosephosphate isomerase.</title>
        <authorList>
            <person name="Mowatt M.R."/>
            <person name="Weinbach E.C."/>
            <person name="Howard T.C."/>
            <person name="Nash T.E."/>
        </authorList>
    </citation>
    <scope>NUCLEOTIDE SEQUENCE</scope>
    <source>
        <strain>ATCC 30957 / WB</strain>
    </source>
</reference>
<keyword id="KW-0002">3D-structure</keyword>
<keyword id="KW-0963">Cytoplasm</keyword>
<keyword id="KW-0312">Gluconeogenesis</keyword>
<keyword id="KW-0324">Glycolysis</keyword>
<keyword id="KW-0413">Isomerase</keyword>
<keyword id="KW-0456">Lyase</keyword>
<sequence>MPARRPFIGGNFKCNGSLDFIKSHVAAIAAHKIPDSVDVVIAPSAVHLSTAIAANTSKQLRIAAQNVYLEGNGAWTGETSVEMLQDMGLKHVIVGHSERRRIMGETDEQSAKKAKRALEKGMTVIFCVGETLDERKANRTMEVNIAQLEALGKELGESKMLWKEVVIAYEPVWSIGTGVVATPEQAEEVHVGLRKWFAEKVCAEGAQHIRIIYGGSANGSNCEKLGQCPNIDGFLVGGASLKPEFMTMIDILTKTRT</sequence>
<name>TPI1_GIAIN</name>
<proteinExistence type="evidence at protein level"/>
<organism>
    <name type="scientific">Giardia intestinalis</name>
    <name type="common">Giardia lamblia</name>
    <dbReference type="NCBI Taxonomy" id="5741"/>
    <lineage>
        <taxon>Eukaryota</taxon>
        <taxon>Metamonada</taxon>
        <taxon>Diplomonadida</taxon>
        <taxon>Hexamitidae</taxon>
        <taxon>Giardiinae</taxon>
        <taxon>Giardia</taxon>
    </lineage>
</organism>
<comment type="function">
    <text evidence="1">Triosephosphate isomerase is an extremely efficient metabolic enzyme that catalyzes the interconversion between dihydroxyacetone phosphate (DHAP) and D-glyceraldehyde-3-phosphate (G3P) in glycolysis and gluconeogenesis.</text>
</comment>
<comment type="function">
    <text evidence="1">It is also responsible for the non-negligible production of methylglyoxal a reactive cytotoxic side-product that modifies and can alter proteins, DNA and lipids.</text>
</comment>
<comment type="catalytic activity">
    <reaction evidence="2">
        <text>D-glyceraldehyde 3-phosphate = dihydroxyacetone phosphate</text>
        <dbReference type="Rhea" id="RHEA:18585"/>
        <dbReference type="ChEBI" id="CHEBI:57642"/>
        <dbReference type="ChEBI" id="CHEBI:59776"/>
        <dbReference type="EC" id="5.3.1.1"/>
    </reaction>
</comment>
<comment type="catalytic activity">
    <reaction evidence="1">
        <text>dihydroxyacetone phosphate = methylglyoxal + phosphate</text>
        <dbReference type="Rhea" id="RHEA:17937"/>
        <dbReference type="ChEBI" id="CHEBI:17158"/>
        <dbReference type="ChEBI" id="CHEBI:43474"/>
        <dbReference type="ChEBI" id="CHEBI:57642"/>
        <dbReference type="EC" id="4.2.3.3"/>
    </reaction>
</comment>
<comment type="pathway">
    <text evidence="2">Carbohydrate biosynthesis; gluconeogenesis.</text>
</comment>
<comment type="pathway">
    <text evidence="2">Carbohydrate degradation; glycolysis; D-glyceraldehyde 3-phosphate from glycerone phosphate: step 1/1.</text>
</comment>
<comment type="subunit">
    <text evidence="2">Homodimer.</text>
</comment>
<comment type="subcellular location">
    <subcellularLocation>
        <location evidence="2">Cytoplasm</location>
    </subcellularLocation>
</comment>
<comment type="similarity">
    <text evidence="3">Belongs to the triosephosphate isomerase family.</text>
</comment>
<protein>
    <recommendedName>
        <fullName>Triosephosphate isomerase</fullName>
        <shortName>TIM</shortName>
        <ecNumber evidence="2">5.3.1.1</ecNumber>
    </recommendedName>
    <alternativeName>
        <fullName evidence="1">Methylglyoxal synthase</fullName>
        <ecNumber evidence="1">4.2.3.3</ecNumber>
    </alternativeName>
    <alternativeName>
        <fullName>Triose-phosphate isomerase</fullName>
    </alternativeName>
</protein>